<reference key="1">
    <citation type="journal article" date="2002" name="Proc. Natl. Acad. Sci. U.S.A.">
        <title>The Brucella suis genome reveals fundamental similarities between animal and plant pathogens and symbionts.</title>
        <authorList>
            <person name="Paulsen I.T."/>
            <person name="Seshadri R."/>
            <person name="Nelson K.E."/>
            <person name="Eisen J.A."/>
            <person name="Heidelberg J.F."/>
            <person name="Read T.D."/>
            <person name="Dodson R.J."/>
            <person name="Umayam L.A."/>
            <person name="Brinkac L.M."/>
            <person name="Beanan M.J."/>
            <person name="Daugherty S.C."/>
            <person name="DeBoy R.T."/>
            <person name="Durkin A.S."/>
            <person name="Kolonay J.F."/>
            <person name="Madupu R."/>
            <person name="Nelson W.C."/>
            <person name="Ayodeji B."/>
            <person name="Kraul M."/>
            <person name="Shetty J."/>
            <person name="Malek J.A."/>
            <person name="Van Aken S.E."/>
            <person name="Riedmuller S."/>
            <person name="Tettelin H."/>
            <person name="Gill S.R."/>
            <person name="White O."/>
            <person name="Salzberg S.L."/>
            <person name="Hoover D.L."/>
            <person name="Lindler L.E."/>
            <person name="Halling S.M."/>
            <person name="Boyle S.M."/>
            <person name="Fraser C.M."/>
        </authorList>
    </citation>
    <scope>NUCLEOTIDE SEQUENCE [LARGE SCALE GENOMIC DNA]</scope>
    <source>
        <strain>1330</strain>
    </source>
</reference>
<reference key="2">
    <citation type="journal article" date="2011" name="J. Bacteriol.">
        <title>Revised genome sequence of Brucella suis 1330.</title>
        <authorList>
            <person name="Tae H."/>
            <person name="Shallom S."/>
            <person name="Settlage R."/>
            <person name="Preston D."/>
            <person name="Adams L.G."/>
            <person name="Garner H.R."/>
        </authorList>
    </citation>
    <scope>NUCLEOTIDE SEQUENCE [LARGE SCALE GENOMIC DNA]</scope>
    <source>
        <strain>1330</strain>
    </source>
</reference>
<evidence type="ECO:0000255" key="1">
    <source>
        <dbReference type="HAMAP-Rule" id="MF_01206"/>
    </source>
</evidence>
<gene>
    <name evidence="1" type="primary">msrP</name>
    <name type="ordered locus">BRA0990</name>
    <name type="ordered locus">BS1330_II0982</name>
</gene>
<sequence length="319" mass="35416">MSSFKPSRFSTARLTGDAVTPKSIYLRRREFMIGLGAIAATGAASSAFADPLEAKTTAYKVDEKLTPQNAVTTYNNFYEFGTDKSDPSANSGSFKPLPWKLTVDGLVKQPKEFDVEELIAKMPLEERIYRMRCVEAWSMVIPWIGFPLSSLLSQVEPLGSAKYIAFTGVVRPDEMPGQTGLFQALNWPYVEGLRLDEAMHPLTILSVGLYGETLPNANGAPIRLVVPWKYGFKGIKAITRISFVEKQPPTSWNRQAANEYGFYANVNPAVDHPRWSQATERRIGEGGFFGSDRRPTLPFNGYGEEVASLYAGMDLKANY</sequence>
<accession>P0A4R1</accession>
<accession>G0KDZ7</accession>
<accession>Q8YD72</accession>
<organism>
    <name type="scientific">Brucella suis biovar 1 (strain 1330)</name>
    <dbReference type="NCBI Taxonomy" id="204722"/>
    <lineage>
        <taxon>Bacteria</taxon>
        <taxon>Pseudomonadati</taxon>
        <taxon>Pseudomonadota</taxon>
        <taxon>Alphaproteobacteria</taxon>
        <taxon>Hyphomicrobiales</taxon>
        <taxon>Brucellaceae</taxon>
        <taxon>Brucella/Ochrobactrum group</taxon>
        <taxon>Brucella</taxon>
    </lineage>
</organism>
<name>MSRP_BRUSU</name>
<keyword id="KW-0479">Metal-binding</keyword>
<keyword id="KW-0500">Molybdenum</keyword>
<keyword id="KW-0560">Oxidoreductase</keyword>
<keyword id="KW-0574">Periplasm</keyword>
<keyword id="KW-0732">Signal</keyword>
<comment type="function">
    <text evidence="1">Part of the MsrPQ system that repairs oxidized periplasmic proteins containing methionine sulfoxide residues (Met-O), using respiratory chain electrons. Thus protects these proteins from oxidative-stress damage caused by reactive species of oxygen and chlorine generated by the host defense mechanisms. MsrPQ is essential for the maintenance of envelope integrity under bleach stress, rescuing a wide series of structurally unrelated periplasmic proteins from methionine oxidation. The catalytic subunit MsrP is non-stereospecific, being able to reduce both (R-) and (S-) diastereoisomers of methionine sulfoxide.</text>
</comment>
<comment type="catalytic activity">
    <reaction evidence="1">
        <text>L-methionyl-[protein] + a quinone + H2O = L-methionyl-(S)-S-oxide-[protein] + a quinol</text>
        <dbReference type="Rhea" id="RHEA:51292"/>
        <dbReference type="Rhea" id="RHEA-COMP:12313"/>
        <dbReference type="Rhea" id="RHEA-COMP:12315"/>
        <dbReference type="ChEBI" id="CHEBI:15377"/>
        <dbReference type="ChEBI" id="CHEBI:16044"/>
        <dbReference type="ChEBI" id="CHEBI:24646"/>
        <dbReference type="ChEBI" id="CHEBI:44120"/>
        <dbReference type="ChEBI" id="CHEBI:132124"/>
    </reaction>
</comment>
<comment type="catalytic activity">
    <reaction evidence="1">
        <text>L-methionyl-[protein] + a quinone + H2O = L-methionyl-(R)-S-oxide-[protein] + a quinol</text>
        <dbReference type="Rhea" id="RHEA:51296"/>
        <dbReference type="Rhea" id="RHEA-COMP:12313"/>
        <dbReference type="Rhea" id="RHEA-COMP:12314"/>
        <dbReference type="ChEBI" id="CHEBI:15377"/>
        <dbReference type="ChEBI" id="CHEBI:16044"/>
        <dbReference type="ChEBI" id="CHEBI:24646"/>
        <dbReference type="ChEBI" id="CHEBI:45764"/>
        <dbReference type="ChEBI" id="CHEBI:132124"/>
    </reaction>
</comment>
<comment type="cofactor">
    <cofactor evidence="1">
        <name>Mo-molybdopterin</name>
        <dbReference type="ChEBI" id="CHEBI:71302"/>
    </cofactor>
    <text evidence="1">Binds 1 Mo-molybdopterin (Mo-MPT) cofactor per subunit.</text>
</comment>
<comment type="subunit">
    <text evidence="1">Heterodimer of a catalytic subunit (MsrP) and a heme-binding subunit (MsrQ).</text>
</comment>
<comment type="subcellular location">
    <subcellularLocation>
        <location evidence="1">Periplasm</location>
    </subcellularLocation>
    <text evidence="1">Is attached to the inner membrane when interacting with the MsrQ subunit.</text>
</comment>
<comment type="PTM">
    <text evidence="1">Predicted to be exported by the Tat system. The position of the signal peptide cleavage has not been experimentally proven.</text>
</comment>
<comment type="similarity">
    <text evidence="1">Belongs to the MsrP family.</text>
</comment>
<dbReference type="EC" id="1.8.5.-" evidence="1"/>
<dbReference type="EMBL" id="AE014292">
    <property type="protein sequence ID" value="AAN34159.1"/>
    <property type="molecule type" value="Genomic_DNA"/>
</dbReference>
<dbReference type="EMBL" id="CP002998">
    <property type="protein sequence ID" value="AEM20435.1"/>
    <property type="molecule type" value="Genomic_DNA"/>
</dbReference>
<dbReference type="RefSeq" id="WP_002965661.1">
    <property type="nucleotide sequence ID" value="NZ_KN046805.1"/>
</dbReference>
<dbReference type="SMR" id="P0A4R1"/>
<dbReference type="GeneID" id="97534956"/>
<dbReference type="KEGG" id="bms:BRA0990"/>
<dbReference type="KEGG" id="bsi:BS1330_II0982"/>
<dbReference type="PATRIC" id="fig|204722.21.peg.1134"/>
<dbReference type="HOGENOM" id="CLU_045520_0_0_5"/>
<dbReference type="PhylomeDB" id="P0A4R1"/>
<dbReference type="Proteomes" id="UP000007104">
    <property type="component" value="Chromosome II"/>
</dbReference>
<dbReference type="GO" id="GO:0042597">
    <property type="term" value="C:periplasmic space"/>
    <property type="evidence" value="ECO:0007669"/>
    <property type="project" value="UniProtKB-SubCell"/>
</dbReference>
<dbReference type="GO" id="GO:0046872">
    <property type="term" value="F:metal ion binding"/>
    <property type="evidence" value="ECO:0007669"/>
    <property type="project" value="UniProtKB-KW"/>
</dbReference>
<dbReference type="GO" id="GO:0043546">
    <property type="term" value="F:molybdopterin cofactor binding"/>
    <property type="evidence" value="ECO:0007669"/>
    <property type="project" value="UniProtKB-UniRule"/>
</dbReference>
<dbReference type="GO" id="GO:0016672">
    <property type="term" value="F:oxidoreductase activity, acting on a sulfur group of donors, quinone or similar compound as acceptor"/>
    <property type="evidence" value="ECO:0007669"/>
    <property type="project" value="UniProtKB-UniRule"/>
</dbReference>
<dbReference type="GO" id="GO:0030091">
    <property type="term" value="P:protein repair"/>
    <property type="evidence" value="ECO:0007669"/>
    <property type="project" value="UniProtKB-UniRule"/>
</dbReference>
<dbReference type="CDD" id="cd02107">
    <property type="entry name" value="YedY_like_Moco"/>
    <property type="match status" value="1"/>
</dbReference>
<dbReference type="Gene3D" id="3.90.420.10">
    <property type="entry name" value="Oxidoreductase, molybdopterin-binding domain"/>
    <property type="match status" value="1"/>
</dbReference>
<dbReference type="HAMAP" id="MF_01206">
    <property type="entry name" value="MsrP"/>
    <property type="match status" value="1"/>
</dbReference>
<dbReference type="InterPro" id="IPR022867">
    <property type="entry name" value="MsrP"/>
</dbReference>
<dbReference type="InterPro" id="IPR000572">
    <property type="entry name" value="OxRdtase_Mopterin-bd_dom"/>
</dbReference>
<dbReference type="InterPro" id="IPR036374">
    <property type="entry name" value="OxRdtase_Mopterin-bd_sf"/>
</dbReference>
<dbReference type="InterPro" id="IPR006311">
    <property type="entry name" value="TAT_signal"/>
</dbReference>
<dbReference type="NCBIfam" id="NF003767">
    <property type="entry name" value="PRK05363.1"/>
    <property type="match status" value="1"/>
</dbReference>
<dbReference type="PANTHER" id="PTHR43032">
    <property type="entry name" value="PROTEIN-METHIONINE-SULFOXIDE REDUCTASE"/>
    <property type="match status" value="1"/>
</dbReference>
<dbReference type="PANTHER" id="PTHR43032:SF3">
    <property type="entry name" value="PROTEIN-METHIONINE-SULFOXIDE REDUCTASE CATALYTIC SUBUNIT MSRP"/>
    <property type="match status" value="1"/>
</dbReference>
<dbReference type="Pfam" id="PF00174">
    <property type="entry name" value="Oxidored_molyb"/>
    <property type="match status" value="1"/>
</dbReference>
<dbReference type="SUPFAM" id="SSF56524">
    <property type="entry name" value="Oxidoreductase molybdopterin-binding domain"/>
    <property type="match status" value="1"/>
</dbReference>
<dbReference type="PROSITE" id="PS51318">
    <property type="entry name" value="TAT"/>
    <property type="match status" value="1"/>
</dbReference>
<proteinExistence type="inferred from homology"/>
<feature type="signal peptide" description="Tat-type signal" evidence="1">
    <location>
        <begin position="1"/>
        <end position="54"/>
    </location>
</feature>
<feature type="chain" id="PRO_0000070677" description="Protein-methionine-sulfoxide reductase catalytic subunit MsrP" evidence="1">
    <location>
        <begin position="55"/>
        <end position="319"/>
    </location>
</feature>
<feature type="binding site" evidence="1">
    <location>
        <position position="75"/>
    </location>
    <ligand>
        <name>Mo-molybdopterin</name>
        <dbReference type="ChEBI" id="CHEBI:71302"/>
    </ligand>
</feature>
<feature type="binding site" evidence="1">
    <location>
        <begin position="78"/>
        <end position="79"/>
    </location>
    <ligand>
        <name>Mo-molybdopterin</name>
        <dbReference type="ChEBI" id="CHEBI:71302"/>
    </ligand>
</feature>
<feature type="binding site" evidence="1">
    <location>
        <position position="133"/>
    </location>
    <ligand>
        <name>Mo-molybdopterin</name>
        <dbReference type="ChEBI" id="CHEBI:71302"/>
    </ligand>
    <ligandPart>
        <name>Mo</name>
        <dbReference type="ChEBI" id="CHEBI:28685"/>
    </ligandPart>
</feature>
<feature type="binding site" evidence="1">
    <location>
        <position position="218"/>
    </location>
    <ligand>
        <name>Mo-molybdopterin</name>
        <dbReference type="ChEBI" id="CHEBI:71302"/>
    </ligand>
</feature>
<feature type="binding site" evidence="1">
    <location>
        <position position="223"/>
    </location>
    <ligand>
        <name>Mo-molybdopterin</name>
        <dbReference type="ChEBI" id="CHEBI:71302"/>
    </ligand>
</feature>
<feature type="binding site" evidence="1">
    <location>
        <begin position="234"/>
        <end position="236"/>
    </location>
    <ligand>
        <name>Mo-molybdopterin</name>
        <dbReference type="ChEBI" id="CHEBI:71302"/>
    </ligand>
</feature>
<protein>
    <recommendedName>
        <fullName evidence="1">Protein-methionine-sulfoxide reductase catalytic subunit MsrP</fullName>
        <ecNumber evidence="1">1.8.5.-</ecNumber>
    </recommendedName>
</protein>